<protein>
    <recommendedName>
        <fullName evidence="2">Conotoxin Cl9b</fullName>
    </recommendedName>
    <alternativeName>
        <fullName evidence="3">Cal9.8</fullName>
    </alternativeName>
</protein>
<proteinExistence type="evidence at protein level"/>
<name>CU9B_CONCL</name>
<reference key="1">
    <citation type="journal article" date="2010" name="Mol. Phylogenet. Evol.">
        <title>Evolution of Conus peptide toxins: analysis of Conus californicus Reeve, 1844.</title>
        <authorList>
            <person name="Biggs J.S."/>
            <person name="Watkins M."/>
            <person name="Puillandre N."/>
            <person name="Ownby J.P."/>
            <person name="Lopez-Vera E."/>
            <person name="Christensen S."/>
            <person name="Moreno K.J."/>
            <person name="Bernaldez J."/>
            <person name="Licea-Navarro A."/>
            <person name="Corneli P.S."/>
            <person name="Olivera B.M."/>
        </authorList>
    </citation>
    <scope>PROTEIN SEQUENCE</scope>
    <scope>HYDROXYLATION AT PRO-17 AND PRO-28</scope>
    <source>
        <tissue>Venom</tissue>
    </source>
</reference>
<keyword id="KW-0903">Direct protein sequencing</keyword>
<keyword id="KW-1015">Disulfide bond</keyword>
<keyword id="KW-0379">Hydroxylation</keyword>
<keyword id="KW-0528">Neurotoxin</keyword>
<keyword id="KW-0964">Secreted</keyword>
<keyword id="KW-0800">Toxin</keyword>
<comment type="subcellular location">
    <subcellularLocation>
        <location evidence="1">Secreted</location>
    </subcellularLocation>
</comment>
<comment type="tissue specificity">
    <text>Expressed by the venom duct.</text>
</comment>
<comment type="domain">
    <text evidence="1">The cysteine framework is IX (C-C-C-C-C-C).</text>
</comment>
<comment type="PTM">
    <text evidence="1">Contains 3 disulfide bonds.</text>
</comment>
<dbReference type="GO" id="GO:0005576">
    <property type="term" value="C:extracellular region"/>
    <property type="evidence" value="ECO:0007669"/>
    <property type="project" value="UniProtKB-SubCell"/>
</dbReference>
<dbReference type="GO" id="GO:0090729">
    <property type="term" value="F:toxin activity"/>
    <property type="evidence" value="ECO:0007669"/>
    <property type="project" value="UniProtKB-KW"/>
</dbReference>
<organism>
    <name type="scientific">Californiconus californicus</name>
    <name type="common">California cone</name>
    <name type="synonym">Conus californicus</name>
    <dbReference type="NCBI Taxonomy" id="1736779"/>
    <lineage>
        <taxon>Eukaryota</taxon>
        <taxon>Metazoa</taxon>
        <taxon>Spiralia</taxon>
        <taxon>Lophotrochozoa</taxon>
        <taxon>Mollusca</taxon>
        <taxon>Gastropoda</taxon>
        <taxon>Caenogastropoda</taxon>
        <taxon>Neogastropoda</taxon>
        <taxon>Conoidea</taxon>
        <taxon>Conidae</taxon>
        <taxon>Californiconus</taxon>
    </lineage>
</organism>
<feature type="peptide" id="PRO_0000415053" description="Conotoxin Cl9b">
    <location>
        <begin position="1"/>
        <end position="28" status="greater than"/>
    </location>
</feature>
<feature type="modified residue" description="4-hydroxyproline" evidence="4">
    <location>
        <position position="17"/>
    </location>
</feature>
<feature type="modified residue" description="4-hydroxyproline" evidence="4">
    <location>
        <position position="28"/>
    </location>
</feature>
<feature type="non-terminal residue">
    <location>
        <position position="28"/>
    </location>
</feature>
<accession>P0DJB7</accession>
<sequence>DDETTFPCNSGRCACLPEDSHSYTCQSP</sequence>
<evidence type="ECO:0000250" key="1"/>
<evidence type="ECO:0000303" key="2">
    <source>
    </source>
</evidence>
<evidence type="ECO:0000305" key="3"/>
<evidence type="ECO:0000305" key="4">
    <source>
    </source>
</evidence>